<gene>
    <name evidence="1" type="primary">ccsA</name>
    <name type="synonym">ycf11</name>
</gene>
<evidence type="ECO:0000255" key="1">
    <source>
        <dbReference type="HAMAP-Rule" id="MF_01391"/>
    </source>
</evidence>
<keyword id="KW-0150">Chloroplast</keyword>
<keyword id="KW-0201">Cytochrome c-type biogenesis</keyword>
<keyword id="KW-0472">Membrane</keyword>
<keyword id="KW-0934">Plastid</keyword>
<keyword id="KW-0793">Thylakoid</keyword>
<keyword id="KW-0812">Transmembrane</keyword>
<keyword id="KW-1133">Transmembrane helix</keyword>
<dbReference type="EMBL" id="AF022186">
    <property type="protein sequence ID" value="AAB82688.1"/>
    <property type="molecule type" value="Genomic_DNA"/>
</dbReference>
<dbReference type="PIR" id="T11969">
    <property type="entry name" value="T11969"/>
</dbReference>
<dbReference type="RefSeq" id="NP_045073.1">
    <property type="nucleotide sequence ID" value="NC_001840.1"/>
</dbReference>
<dbReference type="SMR" id="O19901"/>
<dbReference type="GeneID" id="800132"/>
<dbReference type="GO" id="GO:0009535">
    <property type="term" value="C:chloroplast thylakoid membrane"/>
    <property type="evidence" value="ECO:0007669"/>
    <property type="project" value="UniProtKB-SubCell"/>
</dbReference>
<dbReference type="GO" id="GO:0005886">
    <property type="term" value="C:plasma membrane"/>
    <property type="evidence" value="ECO:0007669"/>
    <property type="project" value="TreeGrafter"/>
</dbReference>
<dbReference type="GO" id="GO:0020037">
    <property type="term" value="F:heme binding"/>
    <property type="evidence" value="ECO:0007669"/>
    <property type="project" value="InterPro"/>
</dbReference>
<dbReference type="GO" id="GO:0017004">
    <property type="term" value="P:cytochrome complex assembly"/>
    <property type="evidence" value="ECO:0007669"/>
    <property type="project" value="UniProtKB-UniRule"/>
</dbReference>
<dbReference type="HAMAP" id="MF_01391">
    <property type="entry name" value="CytC_CcsA"/>
    <property type="match status" value="1"/>
</dbReference>
<dbReference type="InterPro" id="IPR002541">
    <property type="entry name" value="Cyt_c_assembly"/>
</dbReference>
<dbReference type="InterPro" id="IPR017562">
    <property type="entry name" value="Cyt_c_biogenesis_CcsA"/>
</dbReference>
<dbReference type="InterPro" id="IPR045062">
    <property type="entry name" value="Cyt_c_biogenesis_CcsA/CcmC"/>
</dbReference>
<dbReference type="NCBIfam" id="TIGR03144">
    <property type="entry name" value="cytochr_II_ccsB"/>
    <property type="match status" value="1"/>
</dbReference>
<dbReference type="PANTHER" id="PTHR30071:SF1">
    <property type="entry name" value="CYTOCHROME B_B6 PROTEIN-RELATED"/>
    <property type="match status" value="1"/>
</dbReference>
<dbReference type="PANTHER" id="PTHR30071">
    <property type="entry name" value="HEME EXPORTER PROTEIN C"/>
    <property type="match status" value="1"/>
</dbReference>
<dbReference type="Pfam" id="PF01578">
    <property type="entry name" value="Cytochrom_C_asm"/>
    <property type="match status" value="1"/>
</dbReference>
<geneLocation type="chloroplast"/>
<protein>
    <recommendedName>
        <fullName evidence="1">Cytochrome c biogenesis protein CcsA</fullName>
    </recommendedName>
</protein>
<comment type="function">
    <text evidence="1">Required during biogenesis of c-type cytochromes (cytochrome c6 and cytochrome f) at the step of heme attachment.</text>
</comment>
<comment type="subunit">
    <text evidence="1">May interact with Ccs1.</text>
</comment>
<comment type="subcellular location">
    <subcellularLocation>
        <location evidence="1">Plastid</location>
        <location evidence="1">Chloroplast thylakoid membrane</location>
        <topology evidence="1">Multi-pass membrane protein</topology>
    </subcellularLocation>
</comment>
<comment type="similarity">
    <text evidence="1">Belongs to the CcmF/CycK/Ccl1/NrfE/CcsA family.</text>
</comment>
<organism>
    <name type="scientific">Cyanidium caldarium</name>
    <name type="common">Red alga</name>
    <dbReference type="NCBI Taxonomy" id="2771"/>
    <lineage>
        <taxon>Eukaryota</taxon>
        <taxon>Rhodophyta</taxon>
        <taxon>Bangiophyceae</taxon>
        <taxon>Cyanidiales</taxon>
        <taxon>Cyanidiaceae</taxon>
        <taxon>Cyanidium</taxon>
    </lineage>
</organism>
<name>CCSA_CYACA</name>
<proteinExistence type="inferred from homology"/>
<feature type="chain" id="PRO_0000201601" description="Cytochrome c biogenesis protein CcsA">
    <location>
        <begin position="1"/>
        <end position="293"/>
    </location>
</feature>
<feature type="transmembrane region" description="Helical" evidence="1">
    <location>
        <begin position="12"/>
        <end position="32"/>
    </location>
</feature>
<feature type="transmembrane region" description="Helical" evidence="1">
    <location>
        <begin position="39"/>
        <end position="59"/>
    </location>
</feature>
<feature type="transmembrane region" description="Helical" evidence="1">
    <location>
        <begin position="78"/>
        <end position="98"/>
    </location>
</feature>
<feature type="transmembrane region" description="Helical" evidence="1">
    <location>
        <begin position="99"/>
        <end position="119"/>
    </location>
</feature>
<feature type="transmembrane region" description="Helical" evidence="1">
    <location>
        <begin position="142"/>
        <end position="162"/>
    </location>
</feature>
<feature type="transmembrane region" description="Helical" evidence="1">
    <location>
        <begin position="216"/>
        <end position="236"/>
    </location>
</feature>
<feature type="transmembrane region" description="Helical" evidence="1">
    <location>
        <begin position="250"/>
        <end position="267"/>
    </location>
</feature>
<feature type="transmembrane region" description="Helical" evidence="1">
    <location>
        <begin position="273"/>
        <end position="293"/>
    </location>
</feature>
<sequence length="293" mass="33689">MEQYILKLENSINILAFLGALVSSLFYWAKLTYYKQIQVFSLPKFCLIFSNCIIAGMLLERCFRYSYFPLSNLYESLLFLSWVLNIITIIFVDKLSIIGAIGSSAVTLIIGYANYILPPSLRQTSILAPALRSNWLMMHVSVMIFSYGLLIMGAFLSLIYVIVNNNLSQKSLNRMFYLPSFYVDFDKNEPRNDIGTATINRNKLSYETIESLSYKFISLGFISLTLGIISGSVWANEAWGNYWSWDPKETWALITWLVFATYLHIRINKKWNKIYASLVASLGLIVICFVTWE</sequence>
<accession>O19901</accession>
<reference key="1">
    <citation type="journal article" date="2000" name="J. Mol. Evol.">
        <title>The structure and gene repertoire of an ancient red algal plastid genome.</title>
        <authorList>
            <person name="Gloeckner G."/>
            <person name="Rosenthal A."/>
            <person name="Valentin K.-U."/>
        </authorList>
    </citation>
    <scope>NUCLEOTIDE SEQUENCE [LARGE SCALE GENOMIC DNA]</scope>
    <source>
        <strain>RK-1</strain>
    </source>
</reference>